<dbReference type="EC" id="2.3.1.61" evidence="2"/>
<dbReference type="EMBL" id="AJ938182">
    <property type="protein sequence ID" value="CAI80957.1"/>
    <property type="molecule type" value="Genomic_DNA"/>
</dbReference>
<dbReference type="RefSeq" id="WP_001115457.1">
    <property type="nucleotide sequence ID" value="NC_007622.1"/>
</dbReference>
<dbReference type="SMR" id="Q2YY06"/>
<dbReference type="KEGG" id="sab:SAB1268c"/>
<dbReference type="HOGENOM" id="CLU_016733_0_0_9"/>
<dbReference type="UniPathway" id="UPA00868">
    <property type="reaction ID" value="UER00840"/>
</dbReference>
<dbReference type="GO" id="GO:0005829">
    <property type="term" value="C:cytosol"/>
    <property type="evidence" value="ECO:0007669"/>
    <property type="project" value="TreeGrafter"/>
</dbReference>
<dbReference type="GO" id="GO:0045252">
    <property type="term" value="C:oxoglutarate dehydrogenase complex"/>
    <property type="evidence" value="ECO:0007669"/>
    <property type="project" value="InterPro"/>
</dbReference>
<dbReference type="GO" id="GO:0004149">
    <property type="term" value="F:dihydrolipoyllysine-residue succinyltransferase activity"/>
    <property type="evidence" value="ECO:0007669"/>
    <property type="project" value="UniProtKB-EC"/>
</dbReference>
<dbReference type="GO" id="GO:0033512">
    <property type="term" value="P:L-lysine catabolic process to acetyl-CoA via saccharopine"/>
    <property type="evidence" value="ECO:0007669"/>
    <property type="project" value="UniProtKB-UniPathway"/>
</dbReference>
<dbReference type="GO" id="GO:0006099">
    <property type="term" value="P:tricarboxylic acid cycle"/>
    <property type="evidence" value="ECO:0007669"/>
    <property type="project" value="UniProtKB-KW"/>
</dbReference>
<dbReference type="CDD" id="cd06849">
    <property type="entry name" value="lipoyl_domain"/>
    <property type="match status" value="1"/>
</dbReference>
<dbReference type="FunFam" id="3.30.559.10:FF:000007">
    <property type="entry name" value="Dihydrolipoamide acetyltransferase component of pyruvate dehydrogenase complex"/>
    <property type="match status" value="1"/>
</dbReference>
<dbReference type="Gene3D" id="2.40.50.100">
    <property type="match status" value="1"/>
</dbReference>
<dbReference type="Gene3D" id="3.30.559.10">
    <property type="entry name" value="Chloramphenicol acetyltransferase-like domain"/>
    <property type="match status" value="1"/>
</dbReference>
<dbReference type="Gene3D" id="4.10.320.10">
    <property type="entry name" value="E3-binding domain"/>
    <property type="match status" value="1"/>
</dbReference>
<dbReference type="InterPro" id="IPR003016">
    <property type="entry name" value="2-oxoA_DH_lipoyl-BS"/>
</dbReference>
<dbReference type="InterPro" id="IPR050537">
    <property type="entry name" value="2-oxoacid_dehydrogenase"/>
</dbReference>
<dbReference type="InterPro" id="IPR001078">
    <property type="entry name" value="2-oxoacid_DH_actylTfrase"/>
</dbReference>
<dbReference type="InterPro" id="IPR000089">
    <property type="entry name" value="Biotin_lipoyl"/>
</dbReference>
<dbReference type="InterPro" id="IPR023213">
    <property type="entry name" value="CAT-like_dom_sf"/>
</dbReference>
<dbReference type="InterPro" id="IPR036625">
    <property type="entry name" value="E3-bd_dom_sf"/>
</dbReference>
<dbReference type="InterPro" id="IPR004167">
    <property type="entry name" value="PSBD"/>
</dbReference>
<dbReference type="InterPro" id="IPR011053">
    <property type="entry name" value="Single_hybrid_motif"/>
</dbReference>
<dbReference type="InterPro" id="IPR006255">
    <property type="entry name" value="SucB"/>
</dbReference>
<dbReference type="NCBIfam" id="NF004309">
    <property type="entry name" value="PRK05704.1"/>
    <property type="match status" value="1"/>
</dbReference>
<dbReference type="NCBIfam" id="TIGR01347">
    <property type="entry name" value="sucB"/>
    <property type="match status" value="1"/>
</dbReference>
<dbReference type="PANTHER" id="PTHR43416:SF5">
    <property type="entry name" value="DIHYDROLIPOYLLYSINE-RESIDUE SUCCINYLTRANSFERASE COMPONENT OF 2-OXOGLUTARATE DEHYDROGENASE COMPLEX, MITOCHONDRIAL"/>
    <property type="match status" value="1"/>
</dbReference>
<dbReference type="PANTHER" id="PTHR43416">
    <property type="entry name" value="DIHYDROLIPOYLLYSINE-RESIDUE SUCCINYLTRANSFERASE COMPONENT OF 2-OXOGLUTARATE DEHYDROGENASE COMPLEX, MITOCHONDRIAL-RELATED"/>
    <property type="match status" value="1"/>
</dbReference>
<dbReference type="Pfam" id="PF00198">
    <property type="entry name" value="2-oxoacid_dh"/>
    <property type="match status" value="1"/>
</dbReference>
<dbReference type="Pfam" id="PF00364">
    <property type="entry name" value="Biotin_lipoyl"/>
    <property type="match status" value="1"/>
</dbReference>
<dbReference type="Pfam" id="PF02817">
    <property type="entry name" value="E3_binding"/>
    <property type="match status" value="1"/>
</dbReference>
<dbReference type="SUPFAM" id="SSF52777">
    <property type="entry name" value="CoA-dependent acyltransferases"/>
    <property type="match status" value="1"/>
</dbReference>
<dbReference type="SUPFAM" id="SSF51230">
    <property type="entry name" value="Single hybrid motif"/>
    <property type="match status" value="1"/>
</dbReference>
<dbReference type="PROSITE" id="PS50968">
    <property type="entry name" value="BIOTINYL_LIPOYL"/>
    <property type="match status" value="1"/>
</dbReference>
<dbReference type="PROSITE" id="PS00189">
    <property type="entry name" value="LIPOYL"/>
    <property type="match status" value="1"/>
</dbReference>
<dbReference type="PROSITE" id="PS51826">
    <property type="entry name" value="PSBD"/>
    <property type="match status" value="1"/>
</dbReference>
<reference key="1">
    <citation type="journal article" date="2007" name="PLoS ONE">
        <title>Molecular correlates of host specialization in Staphylococcus aureus.</title>
        <authorList>
            <person name="Herron-Olson L."/>
            <person name="Fitzgerald J.R."/>
            <person name="Musser J.M."/>
            <person name="Kapur V."/>
        </authorList>
    </citation>
    <scope>NUCLEOTIDE SEQUENCE [LARGE SCALE GENOMIC DNA]</scope>
    <source>
        <strain>bovine RF122 / ET3-1</strain>
    </source>
</reference>
<organism>
    <name type="scientific">Staphylococcus aureus (strain bovine RF122 / ET3-1)</name>
    <dbReference type="NCBI Taxonomy" id="273036"/>
    <lineage>
        <taxon>Bacteria</taxon>
        <taxon>Bacillati</taxon>
        <taxon>Bacillota</taxon>
        <taxon>Bacilli</taxon>
        <taxon>Bacillales</taxon>
        <taxon>Staphylococcaceae</taxon>
        <taxon>Staphylococcus</taxon>
    </lineage>
</organism>
<name>ODO2_STAAB</name>
<sequence>MPEVKVPELAESITEGTIAEWLKNVGDSVEKGEAILELETDKVNVEVVSEEAGVLSEQLASEGDTVEVGQAIAVIGEGSGNASKENSNDNTPQQNEETNNKKEETTNKSADNAEVNQTNDYNQQRVNATPSARRYARENGVNLAEVSPKTNDVVRKEDIDKKQQAPASTQTTQQAPAKEEKKYNQYPTKPVIREKMSRRKKTAAKKLLEVSNNTAMLTTFNEVDMTNVMELRKRKKEQFMKDHDGTKLGFMSFFTKASVAALKKYPEVNAEIDGDDMITKQYYDIGVAVSTDDGLLVPFVRDCDKKNFAEIEAEIANLAVKAREKKLGLDDMVNGSFTITNGGIFGSMMSTPIINGNQAAILGMHSIITRPIAIDQDTIENRPMMYIALSYDHRIIDGKEAVGFLKTIKELIENPEDLLLES</sequence>
<accession>Q2YY06</accession>
<feature type="chain" id="PRO_0000288098" description="Dihydrolipoyllysine-residue succinyltransferase component of 2-oxoglutarate dehydrogenase complex">
    <location>
        <begin position="1"/>
        <end position="422"/>
    </location>
</feature>
<feature type="domain" description="Lipoyl-binding" evidence="3">
    <location>
        <begin position="1"/>
        <end position="76"/>
    </location>
</feature>
<feature type="domain" description="Peripheral subunit-binding (PSBD)" evidence="4">
    <location>
        <begin position="127"/>
        <end position="163"/>
    </location>
</feature>
<feature type="region of interest" description="Disordered" evidence="5">
    <location>
        <begin position="77"/>
        <end position="184"/>
    </location>
</feature>
<feature type="compositionally biased region" description="Polar residues" evidence="5">
    <location>
        <begin position="80"/>
        <end position="94"/>
    </location>
</feature>
<feature type="compositionally biased region" description="Polar residues" evidence="5">
    <location>
        <begin position="114"/>
        <end position="130"/>
    </location>
</feature>
<feature type="compositionally biased region" description="Basic and acidic residues" evidence="5">
    <location>
        <begin position="152"/>
        <end position="163"/>
    </location>
</feature>
<feature type="compositionally biased region" description="Low complexity" evidence="5">
    <location>
        <begin position="164"/>
        <end position="176"/>
    </location>
</feature>
<feature type="active site" evidence="2">
    <location>
        <position position="393"/>
    </location>
</feature>
<feature type="active site" evidence="2">
    <location>
        <position position="397"/>
    </location>
</feature>
<feature type="modified residue" description="N6-lipoyllysine" evidence="3">
    <location>
        <position position="42"/>
    </location>
</feature>
<protein>
    <recommendedName>
        <fullName>Dihydrolipoyllysine-residue succinyltransferase component of 2-oxoglutarate dehydrogenase complex</fullName>
        <ecNumber evidence="2">2.3.1.61</ecNumber>
    </recommendedName>
    <alternativeName>
        <fullName>2-oxoglutarate dehydrogenase complex component E2</fullName>
        <shortName>OGDC-E2</shortName>
    </alternativeName>
    <alternativeName>
        <fullName>Dihydrolipoamide succinyltransferase component of 2-oxoglutarate dehydrogenase complex</fullName>
    </alternativeName>
</protein>
<evidence type="ECO:0000250" key="1"/>
<evidence type="ECO:0000250" key="2">
    <source>
        <dbReference type="UniProtKB" id="P0AFG6"/>
    </source>
</evidence>
<evidence type="ECO:0000255" key="3">
    <source>
        <dbReference type="PROSITE-ProRule" id="PRU01066"/>
    </source>
</evidence>
<evidence type="ECO:0000255" key="4">
    <source>
        <dbReference type="PROSITE-ProRule" id="PRU01170"/>
    </source>
</evidence>
<evidence type="ECO:0000256" key="5">
    <source>
        <dbReference type="SAM" id="MobiDB-lite"/>
    </source>
</evidence>
<evidence type="ECO:0000305" key="6"/>
<comment type="function">
    <text evidence="2">E2 component of the 2-oxoglutarate dehydrogenase (OGDH) complex which catalyzes the second step in the conversion of 2-oxoglutarate to succinyl-CoA and CO(2).</text>
</comment>
<comment type="catalytic activity">
    <reaction evidence="2">
        <text>N(6)-[(R)-dihydrolipoyl]-L-lysyl-[protein] + succinyl-CoA = N(6)-[(R)-S(8)-succinyldihydrolipoyl]-L-lysyl-[protein] + CoA</text>
        <dbReference type="Rhea" id="RHEA:15213"/>
        <dbReference type="Rhea" id="RHEA-COMP:10475"/>
        <dbReference type="Rhea" id="RHEA-COMP:20092"/>
        <dbReference type="ChEBI" id="CHEBI:57287"/>
        <dbReference type="ChEBI" id="CHEBI:57292"/>
        <dbReference type="ChEBI" id="CHEBI:83100"/>
        <dbReference type="ChEBI" id="CHEBI:83120"/>
        <dbReference type="EC" id="2.3.1.61"/>
    </reaction>
</comment>
<comment type="cofactor">
    <cofactor evidence="1">
        <name>(R)-lipoate</name>
        <dbReference type="ChEBI" id="CHEBI:83088"/>
    </cofactor>
    <text evidence="1">Binds 1 lipoyl cofactor covalently.</text>
</comment>
<comment type="pathway">
    <text>Amino-acid degradation; L-lysine degradation via saccharopine pathway; glutaryl-CoA from L-lysine: step 6/6.</text>
</comment>
<comment type="subunit">
    <text evidence="2">Forms a 24-polypeptide structural core with octahedral symmetry. Part of the 2-oxoglutarate dehydrogenase (OGDH) complex composed of E1 (2-oxoglutarate dehydrogenase), E2 (dihydrolipoamide succinyltransferase) and E3 (dihydrolipoamide dehydrogenase); the complex contains multiple copies of the three enzymatic components (E1, E2 and E3).</text>
</comment>
<comment type="similarity">
    <text evidence="6">Belongs to the 2-oxoacid dehydrogenase family.</text>
</comment>
<gene>
    <name type="primary">odhB</name>
    <name type="ordered locus">SAB1268c</name>
</gene>
<keyword id="KW-0012">Acyltransferase</keyword>
<keyword id="KW-0450">Lipoyl</keyword>
<keyword id="KW-0808">Transferase</keyword>
<keyword id="KW-0816">Tricarboxylic acid cycle</keyword>
<proteinExistence type="inferred from homology"/>